<evidence type="ECO:0000250" key="1"/>
<evidence type="ECO:0000255" key="2"/>
<evidence type="ECO:0000305" key="3"/>
<sequence length="602" mass="67322">MKNLSFLINRRKENTSDSNVYPGKAKSHEPSWIEMDDQTKKDGLDIVHVEFSPDTRAPSDSNKVITEIFDATEDAKEADESERGMPLATALNTYPKAAAWSLLVSTTLIMEGYDTAILGAFYALPIFQRKFGSQNDKTGEWEISASWQIGLTLCYMAGEIVGLQLTGPSVDLVGNRYTLIIALFFLAAFTFILYFCNSLGMIAVGQALCGMPWGCFQCLTVSYASEICPLALRYYLTTYSNLCWLFGQLFAAGIMKNSQKKYADSELGYKLPFALQWILPVPLALGIFFAPESPWWLVKKGRFDEARRSLRRTLSGKGPEKEILVTLEVDKIKVTIDKEKRLTSKEGSYSDCFEDKINRRRTRITCLCWAGQATCGSILIGYSTYFYEKAGVSTEMSFTFSIIQYCLGICATFLSWWASKYFGRYDLYAFGLAFQTIVFFIIGGLGCSSTHGSKMGSGSLLMAVAFFYNLGIAPVVFCLVSEMPSSRLRTKTIILARNTYNVVSIICSVLILYQLNSKKWNWGAKSGFFWGVLCFCTLIWAVVDLPETAGKTFVEINELFKLGVSARKFKSTKVDPFVVKNTPKYVSHNDPKGDIEASIAEE</sequence>
<gene>
    <name type="primary">MPH3</name>
    <name type="ORF">SCY_0676</name>
</gene>
<feature type="chain" id="PRO_0000391712" description="Alpha-glucosides permease MPH3">
    <location>
        <begin position="1"/>
        <end position="602"/>
    </location>
</feature>
<feature type="topological domain" description="Cytoplasmic" evidence="1">
    <location>
        <begin position="1"/>
        <end position="106"/>
    </location>
</feature>
<feature type="transmembrane region" description="Helical; Name=1" evidence="2">
    <location>
        <begin position="107"/>
        <end position="127"/>
    </location>
</feature>
<feature type="topological domain" description="Extracellular" evidence="1">
    <location>
        <begin position="128"/>
        <end position="142"/>
    </location>
</feature>
<feature type="transmembrane region" description="Helical; Name=2" evidence="2">
    <location>
        <begin position="143"/>
        <end position="163"/>
    </location>
</feature>
<feature type="topological domain" description="Cytoplasmic" evidence="1">
    <location>
        <begin position="164"/>
        <end position="178"/>
    </location>
</feature>
<feature type="transmembrane region" description="Helical; Name=3" evidence="2">
    <location>
        <begin position="179"/>
        <end position="199"/>
    </location>
</feature>
<feature type="topological domain" description="Extracellular" evidence="1">
    <location>
        <position position="200"/>
    </location>
</feature>
<feature type="transmembrane region" description="Helical; Name=4" evidence="2">
    <location>
        <begin position="201"/>
        <end position="221"/>
    </location>
</feature>
<feature type="topological domain" description="Cytoplasmic" evidence="1">
    <location>
        <begin position="222"/>
        <end position="234"/>
    </location>
</feature>
<feature type="transmembrane region" description="Helical; Name=5" evidence="2">
    <location>
        <begin position="235"/>
        <end position="255"/>
    </location>
</feature>
<feature type="topological domain" description="Extracellular" evidence="1">
    <location>
        <begin position="256"/>
        <end position="270"/>
    </location>
</feature>
<feature type="transmembrane region" description="Helical; Name=6" evidence="2">
    <location>
        <begin position="271"/>
        <end position="291"/>
    </location>
</feature>
<feature type="topological domain" description="Cytoplasmic" evidence="1">
    <location>
        <begin position="292"/>
        <end position="363"/>
    </location>
</feature>
<feature type="transmembrane region" description="Helical; Name=7" evidence="2">
    <location>
        <begin position="364"/>
        <end position="384"/>
    </location>
</feature>
<feature type="topological domain" description="Extracellular" evidence="1">
    <location>
        <begin position="385"/>
        <end position="397"/>
    </location>
</feature>
<feature type="transmembrane region" description="Helical; Name=8" evidence="2">
    <location>
        <begin position="398"/>
        <end position="418"/>
    </location>
</feature>
<feature type="topological domain" description="Cytoplasmic" evidence="1">
    <location>
        <begin position="419"/>
        <end position="426"/>
    </location>
</feature>
<feature type="transmembrane region" description="Helical; Name=9" evidence="2">
    <location>
        <begin position="427"/>
        <end position="447"/>
    </location>
</feature>
<feature type="topological domain" description="Extracellular" evidence="1">
    <location>
        <begin position="448"/>
        <end position="459"/>
    </location>
</feature>
<feature type="transmembrane region" description="Helical; Name=10" evidence="2">
    <location>
        <begin position="460"/>
        <end position="480"/>
    </location>
</feature>
<feature type="topological domain" description="Cytoplasmic" evidence="1">
    <location>
        <begin position="481"/>
        <end position="492"/>
    </location>
</feature>
<feature type="transmembrane region" description="Helical; Name=11" evidence="2">
    <location>
        <begin position="493"/>
        <end position="513"/>
    </location>
</feature>
<feature type="topological domain" description="Extracellular" evidence="1">
    <location>
        <begin position="514"/>
        <end position="525"/>
    </location>
</feature>
<feature type="transmembrane region" description="Helical; Name=12" evidence="2">
    <location>
        <begin position="526"/>
        <end position="546"/>
    </location>
</feature>
<feature type="topological domain" description="Cytoplasmic" evidence="1">
    <location>
        <begin position="547"/>
        <end position="602"/>
    </location>
</feature>
<organism>
    <name type="scientific">Saccharomyces cerevisiae (strain YJM789)</name>
    <name type="common">Baker's yeast</name>
    <dbReference type="NCBI Taxonomy" id="307796"/>
    <lineage>
        <taxon>Eukaryota</taxon>
        <taxon>Fungi</taxon>
        <taxon>Dikarya</taxon>
        <taxon>Ascomycota</taxon>
        <taxon>Saccharomycotina</taxon>
        <taxon>Saccharomycetes</taxon>
        <taxon>Saccharomycetales</taxon>
        <taxon>Saccharomycetaceae</taxon>
        <taxon>Saccharomyces</taxon>
    </lineage>
</organism>
<reference key="1">
    <citation type="journal article" date="2007" name="Proc. Natl. Acad. Sci. U.S.A.">
        <title>Genome sequencing and comparative analysis of Saccharomyces cerevisiae strain YJM789.</title>
        <authorList>
            <person name="Wei W."/>
            <person name="McCusker J.H."/>
            <person name="Hyman R.W."/>
            <person name="Jones T."/>
            <person name="Ning Y."/>
            <person name="Cao Z."/>
            <person name="Gu Z."/>
            <person name="Bruno D."/>
            <person name="Miranda M."/>
            <person name="Nguyen M."/>
            <person name="Wilhelmy J."/>
            <person name="Komp C."/>
            <person name="Tamse R."/>
            <person name="Wang X."/>
            <person name="Jia P."/>
            <person name="Luedi P."/>
            <person name="Oefner P.J."/>
            <person name="David L."/>
            <person name="Dietrich F.S."/>
            <person name="Li Y."/>
            <person name="Davis R.W."/>
            <person name="Steinmetz L.M."/>
        </authorList>
    </citation>
    <scope>NUCLEOTIDE SEQUENCE [LARGE SCALE GENOMIC DNA]</scope>
    <source>
        <strain>YJM789</strain>
    </source>
</reference>
<dbReference type="EMBL" id="AAFW02000145">
    <property type="protein sequence ID" value="EDN60118.1"/>
    <property type="molecule type" value="Genomic_DNA"/>
</dbReference>
<dbReference type="SMR" id="A6ZX88"/>
<dbReference type="HOGENOM" id="CLU_001265_11_5_1"/>
<dbReference type="OrthoDB" id="21105at4893"/>
<dbReference type="Proteomes" id="UP000007060">
    <property type="component" value="Unassembled WGS sequence"/>
</dbReference>
<dbReference type="GO" id="GO:0005886">
    <property type="term" value="C:plasma membrane"/>
    <property type="evidence" value="ECO:0007669"/>
    <property type="project" value="UniProtKB-SubCell"/>
</dbReference>
<dbReference type="GO" id="GO:0005351">
    <property type="term" value="F:carbohydrate:proton symporter activity"/>
    <property type="evidence" value="ECO:0007669"/>
    <property type="project" value="TreeGrafter"/>
</dbReference>
<dbReference type="GO" id="GO:0000023">
    <property type="term" value="P:maltose metabolic process"/>
    <property type="evidence" value="ECO:0007669"/>
    <property type="project" value="UniProtKB-KW"/>
</dbReference>
<dbReference type="FunFam" id="1.20.1250.20:FF:000254">
    <property type="entry name" value="MAL31p Maltose permease"/>
    <property type="match status" value="1"/>
</dbReference>
<dbReference type="Gene3D" id="1.20.1250.20">
    <property type="entry name" value="MFS general substrate transporter like domains"/>
    <property type="match status" value="1"/>
</dbReference>
<dbReference type="InterPro" id="IPR020846">
    <property type="entry name" value="MFS_dom"/>
</dbReference>
<dbReference type="InterPro" id="IPR005828">
    <property type="entry name" value="MFS_sugar_transport-like"/>
</dbReference>
<dbReference type="InterPro" id="IPR050360">
    <property type="entry name" value="MFS_Sugar_Transporters"/>
</dbReference>
<dbReference type="InterPro" id="IPR036259">
    <property type="entry name" value="MFS_trans_sf"/>
</dbReference>
<dbReference type="InterPro" id="IPR003663">
    <property type="entry name" value="Sugar/inositol_transpt"/>
</dbReference>
<dbReference type="InterPro" id="IPR005829">
    <property type="entry name" value="Sugar_transporter_CS"/>
</dbReference>
<dbReference type="NCBIfam" id="TIGR00879">
    <property type="entry name" value="SP"/>
    <property type="match status" value="1"/>
</dbReference>
<dbReference type="PANTHER" id="PTHR48022:SF5">
    <property type="entry name" value="ALPHA-GLUCOSIDES PERMEASE MPH2-RELATED"/>
    <property type="match status" value="1"/>
</dbReference>
<dbReference type="PANTHER" id="PTHR48022">
    <property type="entry name" value="PLASTIDIC GLUCOSE TRANSPORTER 4"/>
    <property type="match status" value="1"/>
</dbReference>
<dbReference type="Pfam" id="PF00083">
    <property type="entry name" value="Sugar_tr"/>
    <property type="match status" value="1"/>
</dbReference>
<dbReference type="SUPFAM" id="SSF103473">
    <property type="entry name" value="MFS general substrate transporter"/>
    <property type="match status" value="1"/>
</dbReference>
<dbReference type="PROSITE" id="PS50850">
    <property type="entry name" value="MFS"/>
    <property type="match status" value="1"/>
</dbReference>
<dbReference type="PROSITE" id="PS00217">
    <property type="entry name" value="SUGAR_TRANSPORT_2"/>
    <property type="match status" value="1"/>
</dbReference>
<proteinExistence type="inferred from homology"/>
<keyword id="KW-1003">Cell membrane</keyword>
<keyword id="KW-0462">Maltose metabolism</keyword>
<keyword id="KW-0472">Membrane</keyword>
<keyword id="KW-0762">Sugar transport</keyword>
<keyword id="KW-0812">Transmembrane</keyword>
<keyword id="KW-1133">Transmembrane helix</keyword>
<keyword id="KW-0813">Transport</keyword>
<accession>A6ZX88</accession>
<name>MPH3_YEAS7</name>
<comment type="function">
    <text evidence="1">High-affinity uptake of maltose and maltotriose. Also transports alpha-methylglucoside, glucose and turanose but not melezitose or trehalose (By similarity).</text>
</comment>
<comment type="subcellular location">
    <subcellularLocation>
        <location evidence="1">Cell membrane</location>
        <topology evidence="1">Multi-pass membrane protein</topology>
    </subcellularLocation>
</comment>
<comment type="induction">
    <text evidence="1">By maltose and maltotriose. Repressed by glucose (By similarity).</text>
</comment>
<comment type="similarity">
    <text evidence="3">Belongs to the major facilitator superfamily. Sugar transporter (TC 2.A.1.1) family.</text>
</comment>
<protein>
    <recommendedName>
        <fullName>Alpha-glucosides permease MPH3</fullName>
    </recommendedName>
    <alternativeName>
        <fullName>Maltose transport protein 3</fullName>
    </alternativeName>
</protein>